<protein>
    <recommendedName>
        <fullName>Uncharacterized transmembrane protein DDB_G0286729</fullName>
    </recommendedName>
</protein>
<dbReference type="EMBL" id="AAFI02000089">
    <property type="protein sequence ID" value="EAL64120.1"/>
    <property type="molecule type" value="Genomic_DNA"/>
</dbReference>
<dbReference type="RefSeq" id="XP_637646.1">
    <property type="nucleotide sequence ID" value="XM_632554.1"/>
</dbReference>
<dbReference type="FunCoup" id="Q54LB5">
    <property type="interactions" value="435"/>
</dbReference>
<dbReference type="PaxDb" id="44689-DDB0187118"/>
<dbReference type="EnsemblProtists" id="EAL64120">
    <property type="protein sequence ID" value="EAL64120"/>
    <property type="gene ID" value="DDB_G0286729"/>
</dbReference>
<dbReference type="GeneID" id="8625786"/>
<dbReference type="KEGG" id="ddi:DDB_G0286729"/>
<dbReference type="dictyBase" id="DDB_G0286729"/>
<dbReference type="VEuPathDB" id="AmoebaDB:DDB_G0286729"/>
<dbReference type="eggNOG" id="ENOG502RHZD">
    <property type="taxonomic scope" value="Eukaryota"/>
</dbReference>
<dbReference type="HOGENOM" id="CLU_1067231_0_0_1"/>
<dbReference type="InParanoid" id="Q54LB5"/>
<dbReference type="OMA" id="ECTCEST"/>
<dbReference type="PRO" id="PR:Q54LB5"/>
<dbReference type="Proteomes" id="UP000002195">
    <property type="component" value="Chromosome 4"/>
</dbReference>
<dbReference type="GO" id="GO:0016020">
    <property type="term" value="C:membrane"/>
    <property type="evidence" value="ECO:0007669"/>
    <property type="project" value="UniProtKB-SubCell"/>
</dbReference>
<accession>Q54LB5</accession>
<organism>
    <name type="scientific">Dictyostelium discoideum</name>
    <name type="common">Social amoeba</name>
    <dbReference type="NCBI Taxonomy" id="44689"/>
    <lineage>
        <taxon>Eukaryota</taxon>
        <taxon>Amoebozoa</taxon>
        <taxon>Evosea</taxon>
        <taxon>Eumycetozoa</taxon>
        <taxon>Dictyostelia</taxon>
        <taxon>Dictyosteliales</taxon>
        <taxon>Dictyosteliaceae</taxon>
        <taxon>Dictyostelium</taxon>
    </lineage>
</organism>
<gene>
    <name type="ORF">DDB_G0286729</name>
</gene>
<comment type="subcellular location">
    <subcellularLocation>
        <location evidence="3">Membrane</location>
        <topology evidence="3">Multi-pass membrane protein</topology>
    </subcellularLocation>
</comment>
<proteinExistence type="predicted"/>
<keyword id="KW-0472">Membrane</keyword>
<keyword id="KW-1185">Reference proteome</keyword>
<keyword id="KW-0812">Transmembrane</keyword>
<keyword id="KW-1133">Transmembrane helix</keyword>
<name>Y7118_DICDI</name>
<sequence length="261" mass="29323">MGVADNEYISVPTGEPVQQQPQTTSVVFGAPQSYYPHQQPQIILSAPTTTASTSTTDSTVVEENPVCCDRCDLENKVKYQRYSTVGPWLYQIIILFFSQQFLLFSIAPILGLFAMYTQNRCIVVMHFLTAAFYYIFSVIFLFSGDQINTILLSILFSIIFTLSLMNYSRYIKTLNKLANVGECLQSTINGSGFEVTIESQPTPTTIPQPIVQPQPIYVSQLPMMIPQPSSQPPQIIVPQIVYDANHNPIYHLIPIQNSNQH</sequence>
<reference key="1">
    <citation type="journal article" date="2005" name="Nature">
        <title>The genome of the social amoeba Dictyostelium discoideum.</title>
        <authorList>
            <person name="Eichinger L."/>
            <person name="Pachebat J.A."/>
            <person name="Gloeckner G."/>
            <person name="Rajandream M.A."/>
            <person name="Sucgang R."/>
            <person name="Berriman M."/>
            <person name="Song J."/>
            <person name="Olsen R."/>
            <person name="Szafranski K."/>
            <person name="Xu Q."/>
            <person name="Tunggal B."/>
            <person name="Kummerfeld S."/>
            <person name="Madera M."/>
            <person name="Konfortov B.A."/>
            <person name="Rivero F."/>
            <person name="Bankier A.T."/>
            <person name="Lehmann R."/>
            <person name="Hamlin N."/>
            <person name="Davies R."/>
            <person name="Gaudet P."/>
            <person name="Fey P."/>
            <person name="Pilcher K."/>
            <person name="Chen G."/>
            <person name="Saunders D."/>
            <person name="Sodergren E.J."/>
            <person name="Davis P."/>
            <person name="Kerhornou A."/>
            <person name="Nie X."/>
            <person name="Hall N."/>
            <person name="Anjard C."/>
            <person name="Hemphill L."/>
            <person name="Bason N."/>
            <person name="Farbrother P."/>
            <person name="Desany B."/>
            <person name="Just E."/>
            <person name="Morio T."/>
            <person name="Rost R."/>
            <person name="Churcher C.M."/>
            <person name="Cooper J."/>
            <person name="Haydock S."/>
            <person name="van Driessche N."/>
            <person name="Cronin A."/>
            <person name="Goodhead I."/>
            <person name="Muzny D.M."/>
            <person name="Mourier T."/>
            <person name="Pain A."/>
            <person name="Lu M."/>
            <person name="Harper D."/>
            <person name="Lindsay R."/>
            <person name="Hauser H."/>
            <person name="James K.D."/>
            <person name="Quiles M."/>
            <person name="Madan Babu M."/>
            <person name="Saito T."/>
            <person name="Buchrieser C."/>
            <person name="Wardroper A."/>
            <person name="Felder M."/>
            <person name="Thangavelu M."/>
            <person name="Johnson D."/>
            <person name="Knights A."/>
            <person name="Loulseged H."/>
            <person name="Mungall K.L."/>
            <person name="Oliver K."/>
            <person name="Price C."/>
            <person name="Quail M.A."/>
            <person name="Urushihara H."/>
            <person name="Hernandez J."/>
            <person name="Rabbinowitsch E."/>
            <person name="Steffen D."/>
            <person name="Sanders M."/>
            <person name="Ma J."/>
            <person name="Kohara Y."/>
            <person name="Sharp S."/>
            <person name="Simmonds M.N."/>
            <person name="Spiegler S."/>
            <person name="Tivey A."/>
            <person name="Sugano S."/>
            <person name="White B."/>
            <person name="Walker D."/>
            <person name="Woodward J.R."/>
            <person name="Winckler T."/>
            <person name="Tanaka Y."/>
            <person name="Shaulsky G."/>
            <person name="Schleicher M."/>
            <person name="Weinstock G.M."/>
            <person name="Rosenthal A."/>
            <person name="Cox E.C."/>
            <person name="Chisholm R.L."/>
            <person name="Gibbs R.A."/>
            <person name="Loomis W.F."/>
            <person name="Platzer M."/>
            <person name="Kay R.R."/>
            <person name="Williams J.G."/>
            <person name="Dear P.H."/>
            <person name="Noegel A.A."/>
            <person name="Barrell B.G."/>
            <person name="Kuspa A."/>
        </authorList>
    </citation>
    <scope>NUCLEOTIDE SEQUENCE [LARGE SCALE GENOMIC DNA]</scope>
    <source>
        <strain>AX4</strain>
    </source>
</reference>
<feature type="chain" id="PRO_0000348516" description="Uncharacterized transmembrane protein DDB_G0286729">
    <location>
        <begin position="1"/>
        <end position="261"/>
    </location>
</feature>
<feature type="transmembrane region" description="Helical" evidence="1">
    <location>
        <begin position="92"/>
        <end position="112"/>
    </location>
</feature>
<feature type="transmembrane region" description="Helical" evidence="1">
    <location>
        <begin position="122"/>
        <end position="142"/>
    </location>
</feature>
<feature type="transmembrane region" description="Helical" evidence="1">
    <location>
        <begin position="147"/>
        <end position="167"/>
    </location>
</feature>
<feature type="region of interest" description="Disordered" evidence="2">
    <location>
        <begin position="1"/>
        <end position="22"/>
    </location>
</feature>
<evidence type="ECO:0000255" key="1"/>
<evidence type="ECO:0000256" key="2">
    <source>
        <dbReference type="SAM" id="MobiDB-lite"/>
    </source>
</evidence>
<evidence type="ECO:0000305" key="3"/>